<name>RS24_THEAC</name>
<evidence type="ECO:0000255" key="1">
    <source>
        <dbReference type="HAMAP-Rule" id="MF_00545"/>
    </source>
</evidence>
<evidence type="ECO:0000305" key="2"/>
<evidence type="ECO:0007829" key="3">
    <source>
        <dbReference type="PDB" id="2G1D"/>
    </source>
</evidence>
<feature type="chain" id="PRO_0000137658" description="Small ribosomal subunit protein eS24">
    <location>
        <begin position="1"/>
        <end position="98"/>
    </location>
</feature>
<feature type="strand" evidence="3">
    <location>
        <begin position="2"/>
        <end position="10"/>
    </location>
</feature>
<feature type="strand" evidence="3">
    <location>
        <begin position="12"/>
        <end position="14"/>
    </location>
</feature>
<feature type="strand" evidence="3">
    <location>
        <begin position="16"/>
        <end position="24"/>
    </location>
</feature>
<feature type="helix" evidence="3">
    <location>
        <begin position="33"/>
        <end position="45"/>
    </location>
</feature>
<feature type="strand" evidence="3">
    <location>
        <begin position="60"/>
        <end position="73"/>
    </location>
</feature>
<feature type="helix" evidence="3">
    <location>
        <begin position="74"/>
        <end position="81"/>
    </location>
</feature>
<comment type="similarity">
    <text evidence="1">Belongs to the eukaryotic ribosomal protein eS24 family.</text>
</comment>
<keyword id="KW-0002">3D-structure</keyword>
<keyword id="KW-1185">Reference proteome</keyword>
<keyword id="KW-0687">Ribonucleoprotein</keyword>
<keyword id="KW-0689">Ribosomal protein</keyword>
<sequence>MDLIIKEKRDNPILKRKEIKYVLKFDSSRTPSREEIKELIAKHEGVDKELVIVDNNKQLTGKHEIEGYTKIYADKPSAMLYEPDYELIRNGLKQKEAK</sequence>
<accession>Q9HJ79</accession>
<organism>
    <name type="scientific">Thermoplasma acidophilum (strain ATCC 25905 / DSM 1728 / JCM 9062 / NBRC 15155 / AMRC-C165)</name>
    <dbReference type="NCBI Taxonomy" id="273075"/>
    <lineage>
        <taxon>Archaea</taxon>
        <taxon>Methanobacteriati</taxon>
        <taxon>Thermoplasmatota</taxon>
        <taxon>Thermoplasmata</taxon>
        <taxon>Thermoplasmatales</taxon>
        <taxon>Thermoplasmataceae</taxon>
        <taxon>Thermoplasma</taxon>
    </lineage>
</organism>
<dbReference type="EMBL" id="AL445066">
    <property type="protein sequence ID" value="CAC12220.1"/>
    <property type="molecule type" value="Genomic_DNA"/>
</dbReference>
<dbReference type="PDB" id="2G1D">
    <property type="method" value="NMR"/>
    <property type="chains" value="A=1-98"/>
</dbReference>
<dbReference type="PDBsum" id="2G1D"/>
<dbReference type="BMRB" id="Q9HJ79"/>
<dbReference type="SMR" id="Q9HJ79"/>
<dbReference type="STRING" id="273075.gene:9572313"/>
<dbReference type="PaxDb" id="273075-Ta1092"/>
<dbReference type="EnsemblBacteria" id="CAC12220">
    <property type="protein sequence ID" value="CAC12220"/>
    <property type="gene ID" value="CAC12220"/>
</dbReference>
<dbReference type="KEGG" id="tac:Ta1092"/>
<dbReference type="eggNOG" id="arCOG04182">
    <property type="taxonomic scope" value="Archaea"/>
</dbReference>
<dbReference type="HOGENOM" id="CLU_107248_3_1_2"/>
<dbReference type="InParanoid" id="Q9HJ79"/>
<dbReference type="EvolutionaryTrace" id="Q9HJ79"/>
<dbReference type="Proteomes" id="UP000001024">
    <property type="component" value="Chromosome"/>
</dbReference>
<dbReference type="GO" id="GO:1990904">
    <property type="term" value="C:ribonucleoprotein complex"/>
    <property type="evidence" value="ECO:0007669"/>
    <property type="project" value="UniProtKB-KW"/>
</dbReference>
<dbReference type="GO" id="GO:0005840">
    <property type="term" value="C:ribosome"/>
    <property type="evidence" value="ECO:0007669"/>
    <property type="project" value="UniProtKB-KW"/>
</dbReference>
<dbReference type="GO" id="GO:0003735">
    <property type="term" value="F:structural constituent of ribosome"/>
    <property type="evidence" value="ECO:0007669"/>
    <property type="project" value="InterPro"/>
</dbReference>
<dbReference type="GO" id="GO:0006412">
    <property type="term" value="P:translation"/>
    <property type="evidence" value="ECO:0007669"/>
    <property type="project" value="UniProtKB-UniRule"/>
</dbReference>
<dbReference type="Gene3D" id="3.30.70.330">
    <property type="match status" value="1"/>
</dbReference>
<dbReference type="HAMAP" id="MF_00545">
    <property type="entry name" value="Ribosomal_eS24"/>
    <property type="match status" value="1"/>
</dbReference>
<dbReference type="InterPro" id="IPR012677">
    <property type="entry name" value="Nucleotide-bd_a/b_plait_sf"/>
</dbReference>
<dbReference type="InterPro" id="IPR001976">
    <property type="entry name" value="Ribosomal_eS24"/>
</dbReference>
<dbReference type="InterPro" id="IPR018098">
    <property type="entry name" value="Ribosomal_eS24_CS"/>
</dbReference>
<dbReference type="InterPro" id="IPR012678">
    <property type="entry name" value="Ribosomal_uL23/eL15/eS24_sf"/>
</dbReference>
<dbReference type="Pfam" id="PF01282">
    <property type="entry name" value="Ribosomal_S24e"/>
    <property type="match status" value="1"/>
</dbReference>
<dbReference type="SUPFAM" id="SSF54189">
    <property type="entry name" value="Ribosomal proteins S24e, L23 and L15e"/>
    <property type="match status" value="1"/>
</dbReference>
<dbReference type="PROSITE" id="PS00529">
    <property type="entry name" value="RIBOSOMAL_S24E"/>
    <property type="match status" value="1"/>
</dbReference>
<protein>
    <recommendedName>
        <fullName evidence="1">Small ribosomal subunit protein eS24</fullName>
    </recommendedName>
    <alternativeName>
        <fullName evidence="2">30S ribosomal protein S24e</fullName>
    </alternativeName>
</protein>
<proteinExistence type="evidence at protein level"/>
<reference key="1">
    <citation type="journal article" date="2000" name="Nature">
        <title>The genome sequence of the thermoacidophilic scavenger Thermoplasma acidophilum.</title>
        <authorList>
            <person name="Ruepp A."/>
            <person name="Graml W."/>
            <person name="Santos-Martinez M.-L."/>
            <person name="Koretke K.K."/>
            <person name="Volker C."/>
            <person name="Mewes H.-W."/>
            <person name="Frishman D."/>
            <person name="Stocker S."/>
            <person name="Lupas A.N."/>
            <person name="Baumeister W."/>
        </authorList>
    </citation>
    <scope>NUCLEOTIDE SEQUENCE [LARGE SCALE GENOMIC DNA]</scope>
    <source>
        <strain>ATCC 25905 / DSM 1728 / JCM 9062 / NBRC 15155 / AMRC-C165</strain>
    </source>
</reference>
<gene>
    <name type="primary">rps2e</name>
    <name type="ordered locus">Ta1092</name>
</gene>